<keyword id="KW-0456">Lyase</keyword>
<keyword id="KW-0663">Pyridoxal phosphate</keyword>
<protein>
    <recommendedName>
        <fullName evidence="1">D-serine dehydratase</fullName>
        <ecNumber evidence="1">4.3.1.18</ecNumber>
    </recommendedName>
    <alternativeName>
        <fullName evidence="1">D-serine deaminase</fullName>
        <shortName evidence="1">DSD</shortName>
    </alternativeName>
</protein>
<reference key="1">
    <citation type="journal article" date="2009" name="PLoS Genet.">
        <title>Organised genome dynamics in the Escherichia coli species results in highly diverse adaptive paths.</title>
        <authorList>
            <person name="Touchon M."/>
            <person name="Hoede C."/>
            <person name="Tenaillon O."/>
            <person name="Barbe V."/>
            <person name="Baeriswyl S."/>
            <person name="Bidet P."/>
            <person name="Bingen E."/>
            <person name="Bonacorsi S."/>
            <person name="Bouchier C."/>
            <person name="Bouvet O."/>
            <person name="Calteau A."/>
            <person name="Chiapello H."/>
            <person name="Clermont O."/>
            <person name="Cruveiller S."/>
            <person name="Danchin A."/>
            <person name="Diard M."/>
            <person name="Dossat C."/>
            <person name="Karoui M.E."/>
            <person name="Frapy E."/>
            <person name="Garry L."/>
            <person name="Ghigo J.M."/>
            <person name="Gilles A.M."/>
            <person name="Johnson J."/>
            <person name="Le Bouguenec C."/>
            <person name="Lescat M."/>
            <person name="Mangenot S."/>
            <person name="Martinez-Jehanne V."/>
            <person name="Matic I."/>
            <person name="Nassif X."/>
            <person name="Oztas S."/>
            <person name="Petit M.A."/>
            <person name="Pichon C."/>
            <person name="Rouy Z."/>
            <person name="Ruf C.S."/>
            <person name="Schneider D."/>
            <person name="Tourret J."/>
            <person name="Vacherie B."/>
            <person name="Vallenet D."/>
            <person name="Medigue C."/>
            <person name="Rocha E.P.C."/>
            <person name="Denamur E."/>
        </authorList>
    </citation>
    <scope>NUCLEOTIDE SEQUENCE [LARGE SCALE GENOMIC DNA]</scope>
    <source>
        <strain>ATCC 35469 / DSM 13698 / BCRC 15582 / CCUG 18766 / IAM 14443 / JCM 21226 / LMG 7866 / NBRC 102419 / NCTC 12128 / CDC 0568-73</strain>
    </source>
</reference>
<proteinExistence type="inferred from homology"/>
<name>SDHD_ESCF3</name>
<accession>B7LK20</accession>
<gene>
    <name evidence="1" type="primary">dsdA</name>
    <name type="ordered locus">EFER_3973</name>
</gene>
<evidence type="ECO:0000255" key="1">
    <source>
        <dbReference type="HAMAP-Rule" id="MF_01030"/>
    </source>
</evidence>
<dbReference type="EC" id="4.3.1.18" evidence="1"/>
<dbReference type="EMBL" id="CU928158">
    <property type="protein sequence ID" value="CAQ91407.1"/>
    <property type="molecule type" value="Genomic_DNA"/>
</dbReference>
<dbReference type="RefSeq" id="WP_000426409.1">
    <property type="nucleotide sequence ID" value="NC_011740.1"/>
</dbReference>
<dbReference type="SMR" id="B7LK20"/>
<dbReference type="GeneID" id="75059566"/>
<dbReference type="KEGG" id="efe:EFER_3973"/>
<dbReference type="HOGENOM" id="CLU_035707_0_0_6"/>
<dbReference type="OrthoDB" id="9780546at2"/>
<dbReference type="Proteomes" id="UP000000745">
    <property type="component" value="Chromosome"/>
</dbReference>
<dbReference type="GO" id="GO:0008721">
    <property type="term" value="F:D-serine ammonia-lyase activity"/>
    <property type="evidence" value="ECO:0007669"/>
    <property type="project" value="UniProtKB-EC"/>
</dbReference>
<dbReference type="GO" id="GO:0016836">
    <property type="term" value="F:hydro-lyase activity"/>
    <property type="evidence" value="ECO:0007669"/>
    <property type="project" value="UniProtKB-UniRule"/>
</dbReference>
<dbReference type="GO" id="GO:0030170">
    <property type="term" value="F:pyridoxal phosphate binding"/>
    <property type="evidence" value="ECO:0007669"/>
    <property type="project" value="InterPro"/>
</dbReference>
<dbReference type="GO" id="GO:0036088">
    <property type="term" value="P:D-serine catabolic process"/>
    <property type="evidence" value="ECO:0007669"/>
    <property type="project" value="TreeGrafter"/>
</dbReference>
<dbReference type="GO" id="GO:0009097">
    <property type="term" value="P:isoleucine biosynthetic process"/>
    <property type="evidence" value="ECO:0007669"/>
    <property type="project" value="TreeGrafter"/>
</dbReference>
<dbReference type="CDD" id="cd06447">
    <property type="entry name" value="D-Ser-dehyd"/>
    <property type="match status" value="1"/>
</dbReference>
<dbReference type="FunFam" id="3.40.50.1100:FF:000018">
    <property type="entry name" value="D-serine dehydratase"/>
    <property type="match status" value="1"/>
</dbReference>
<dbReference type="Gene3D" id="3.40.50.1100">
    <property type="match status" value="2"/>
</dbReference>
<dbReference type="HAMAP" id="MF_01030">
    <property type="entry name" value="D_Ser_dehydrat"/>
    <property type="match status" value="1"/>
</dbReference>
<dbReference type="InterPro" id="IPR011780">
    <property type="entry name" value="D_Ser_am_lyase"/>
</dbReference>
<dbReference type="InterPro" id="IPR050147">
    <property type="entry name" value="Ser/Thr_Dehydratase"/>
</dbReference>
<dbReference type="InterPro" id="IPR000634">
    <property type="entry name" value="Ser/Thr_deHydtase_PyrdxlP-BS"/>
</dbReference>
<dbReference type="InterPro" id="IPR001926">
    <property type="entry name" value="TrpB-like_PALP"/>
</dbReference>
<dbReference type="InterPro" id="IPR036052">
    <property type="entry name" value="TrpB-like_PALP_sf"/>
</dbReference>
<dbReference type="NCBIfam" id="TIGR02035">
    <property type="entry name" value="D_Ser_am_lyase"/>
    <property type="match status" value="1"/>
</dbReference>
<dbReference type="NCBIfam" id="NF002823">
    <property type="entry name" value="PRK02991.1"/>
    <property type="match status" value="1"/>
</dbReference>
<dbReference type="PANTHER" id="PTHR48078:SF9">
    <property type="entry name" value="D-SERINE DEHYDRATASE"/>
    <property type="match status" value="1"/>
</dbReference>
<dbReference type="PANTHER" id="PTHR48078">
    <property type="entry name" value="THREONINE DEHYDRATASE, MITOCHONDRIAL-RELATED"/>
    <property type="match status" value="1"/>
</dbReference>
<dbReference type="Pfam" id="PF00291">
    <property type="entry name" value="PALP"/>
    <property type="match status" value="1"/>
</dbReference>
<dbReference type="SUPFAM" id="SSF53686">
    <property type="entry name" value="Tryptophan synthase beta subunit-like PLP-dependent enzymes"/>
    <property type="match status" value="1"/>
</dbReference>
<dbReference type="PROSITE" id="PS00165">
    <property type="entry name" value="DEHYDRATASE_SER_THR"/>
    <property type="match status" value="1"/>
</dbReference>
<organism>
    <name type="scientific">Escherichia fergusonii (strain ATCC 35469 / DSM 13698 / CCUG 18766 / IAM 14443 / JCM 21226 / LMG 7866 / NBRC 102419 / NCTC 12128 / CDC 0568-73)</name>
    <dbReference type="NCBI Taxonomy" id="585054"/>
    <lineage>
        <taxon>Bacteria</taxon>
        <taxon>Pseudomonadati</taxon>
        <taxon>Pseudomonadota</taxon>
        <taxon>Gammaproteobacteria</taxon>
        <taxon>Enterobacterales</taxon>
        <taxon>Enterobacteriaceae</taxon>
        <taxon>Escherichia</taxon>
    </lineage>
</organism>
<feature type="chain" id="PRO_1000197941" description="D-serine dehydratase">
    <location>
        <begin position="1"/>
        <end position="442"/>
    </location>
</feature>
<feature type="modified residue" description="N6-(pyridoxal phosphate)lysine" evidence="1">
    <location>
        <position position="118"/>
    </location>
</feature>
<comment type="catalytic activity">
    <reaction evidence="1">
        <text>D-serine = pyruvate + NH4(+)</text>
        <dbReference type="Rhea" id="RHEA:13977"/>
        <dbReference type="ChEBI" id="CHEBI:15361"/>
        <dbReference type="ChEBI" id="CHEBI:28938"/>
        <dbReference type="ChEBI" id="CHEBI:35247"/>
        <dbReference type="EC" id="4.3.1.18"/>
    </reaction>
</comment>
<comment type="cofactor">
    <cofactor evidence="1">
        <name>pyridoxal 5'-phosphate</name>
        <dbReference type="ChEBI" id="CHEBI:597326"/>
    </cofactor>
</comment>
<comment type="subunit">
    <text evidence="1">Monomer.</text>
</comment>
<comment type="similarity">
    <text evidence="1">Belongs to the serine/threonine dehydratase family. DsdA subfamily.</text>
</comment>
<sequence>MENAKMNSLIAQYPLVKDLVALKETTWFNPGTTSLAEGLPYVGLTEQDVQDAHARLSRFAPYLAKAFPETAASGGIIESELAAIPAMQKRLEKEYQQPISGQLLLKKDSHLPISGSIKARGGIYEVLAHAEKLALEAGLLTLEDDYSKLLSPEFKQFFSQYSIAVGSTGNLGLSIGIMSARIGFKVTVHMSADARAWKKAKLRSHGVTVVEYEQDYGVAVEEGRKAAQSDPNCFFIDDENSRTLFLGYSVAGQRLKAQFAQQGRIVDADNPLFVYLPCGVGGGPGGVAFGLKLAFGDHVHCFFAEPTHSPCMLLGVHTGLHDQISVQDIGIDNLTAADGLAVGRASGFVGRAMERLLDGFYTLSDQTMYDMLGWLAQEEGIRLEPSALAGMAGPQRVCASVSYQQIHGFSAEQLRNATHLVWATGGGMVPEEEMNQYLAKGR</sequence>